<comment type="function">
    <text evidence="1">Transfers 2-(5''-triphosphoribosyl)-3'-dephosphocoenzyme-A on a serine residue to the apo-acyl carrier protein (gamma chain) of the citrate lyase to yield holo-acyl carrier protein.</text>
</comment>
<comment type="catalytic activity">
    <reaction evidence="1">
        <text>apo-[citrate lyase ACP] + 2'-(5''-triphospho-alpha-D-ribosyl)-3'-dephospho-CoA = holo-[citrate lyase ACP] + diphosphate</text>
        <dbReference type="Rhea" id="RHEA:16333"/>
        <dbReference type="Rhea" id="RHEA-COMP:10157"/>
        <dbReference type="Rhea" id="RHEA-COMP:10158"/>
        <dbReference type="ChEBI" id="CHEBI:29999"/>
        <dbReference type="ChEBI" id="CHEBI:33019"/>
        <dbReference type="ChEBI" id="CHEBI:61378"/>
        <dbReference type="ChEBI" id="CHEBI:82683"/>
        <dbReference type="EC" id="2.7.7.61"/>
    </reaction>
</comment>
<comment type="similarity">
    <text evidence="1">Belongs to the CitX family.</text>
</comment>
<evidence type="ECO:0000255" key="1">
    <source>
        <dbReference type="HAMAP-Rule" id="MF_00398"/>
    </source>
</evidence>
<proteinExistence type="inferred from homology"/>
<organism>
    <name type="scientific">Streptococcus pyogenes serotype M3 (strain ATCC BAA-595 / MGAS315)</name>
    <dbReference type="NCBI Taxonomy" id="198466"/>
    <lineage>
        <taxon>Bacteria</taxon>
        <taxon>Bacillati</taxon>
        <taxon>Bacillota</taxon>
        <taxon>Bacilli</taxon>
        <taxon>Lactobacillales</taxon>
        <taxon>Streptococcaceae</taxon>
        <taxon>Streptococcus</taxon>
    </lineage>
</organism>
<accession>P0DA32</accession>
<accession>Q8K7F0</accession>
<dbReference type="EC" id="2.7.7.61" evidence="1"/>
<dbReference type="EMBL" id="AE014074">
    <property type="protein sequence ID" value="AAM79442.1"/>
    <property type="molecule type" value="Genomic_DNA"/>
</dbReference>
<dbReference type="RefSeq" id="WP_011054513.1">
    <property type="nucleotide sequence ID" value="NC_004070.1"/>
</dbReference>
<dbReference type="SMR" id="P0DA32"/>
<dbReference type="GeneID" id="69900836"/>
<dbReference type="KEGG" id="spg:SpyM3_0835"/>
<dbReference type="HOGENOM" id="CLU_104529_1_0_9"/>
<dbReference type="Proteomes" id="UP000000564">
    <property type="component" value="Chromosome"/>
</dbReference>
<dbReference type="GO" id="GO:0050519">
    <property type="term" value="F:holo-citrate lyase synthase activity"/>
    <property type="evidence" value="ECO:0007669"/>
    <property type="project" value="UniProtKB-UniRule"/>
</dbReference>
<dbReference type="GO" id="GO:0051191">
    <property type="term" value="P:prosthetic group biosynthetic process"/>
    <property type="evidence" value="ECO:0007669"/>
    <property type="project" value="InterPro"/>
</dbReference>
<dbReference type="HAMAP" id="MF_00398">
    <property type="entry name" value="CitX"/>
    <property type="match status" value="1"/>
</dbReference>
<dbReference type="InterPro" id="IPR005551">
    <property type="entry name" value="CitX"/>
</dbReference>
<dbReference type="NCBIfam" id="TIGR03124">
    <property type="entry name" value="citrate_citX"/>
    <property type="match status" value="1"/>
</dbReference>
<dbReference type="NCBIfam" id="NF002383">
    <property type="entry name" value="PRK01392.1"/>
    <property type="match status" value="1"/>
</dbReference>
<dbReference type="Pfam" id="PF03802">
    <property type="entry name" value="CitX"/>
    <property type="match status" value="1"/>
</dbReference>
<protein>
    <recommendedName>
        <fullName evidence="1">Probable apo-citrate lyase phosphoribosyl-dephospho-CoA transferase</fullName>
        <ecNumber evidence="1">2.7.7.61</ecNumber>
    </recommendedName>
    <alternativeName>
        <fullName evidence="1">Apo-ACP nucleodityltransferase</fullName>
    </alternativeName>
    <alternativeName>
        <fullName evidence="1">Holo-ACP synthase</fullName>
    </alternativeName>
    <alternativeName>
        <fullName evidence="1">Holo-citrate lyase synthase</fullName>
    </alternativeName>
</protein>
<name>CITX_STRP3</name>
<keyword id="KW-0548">Nucleotidyltransferase</keyword>
<keyword id="KW-0808">Transferase</keyword>
<feature type="chain" id="PRO_0000214689" description="Probable apo-citrate lyase phosphoribosyl-dephospho-CoA transferase">
    <location>
        <begin position="1"/>
        <end position="192"/>
    </location>
</feature>
<gene>
    <name evidence="1" type="primary">citX</name>
    <name type="ordered locus">SpyM3_0835</name>
</gene>
<reference key="1">
    <citation type="journal article" date="2002" name="Proc. Natl. Acad. Sci. U.S.A.">
        <title>Genome sequence of a serotype M3 strain of group A Streptococcus: phage-encoded toxins, the high-virulence phenotype, and clone emergence.</title>
        <authorList>
            <person name="Beres S.B."/>
            <person name="Sylva G.L."/>
            <person name="Barbian K.D."/>
            <person name="Lei B."/>
            <person name="Hoff J.S."/>
            <person name="Mammarella N.D."/>
            <person name="Liu M.-Y."/>
            <person name="Smoot J.C."/>
            <person name="Porcella S.F."/>
            <person name="Parkins L.D."/>
            <person name="Campbell D.S."/>
            <person name="Smith T.M."/>
            <person name="McCormick J.K."/>
            <person name="Leung D.Y.M."/>
            <person name="Schlievert P.M."/>
            <person name="Musser J.M."/>
        </authorList>
    </citation>
    <scope>NUCLEOTIDE SEQUENCE [LARGE SCALE GENOMIC DNA]</scope>
    <source>
        <strain>ATCC BAA-595 / MGAS315</strain>
    </source>
</reference>
<sequence length="192" mass="21646">MCKDTYFSGEAIQLSDMLRAREERALRQLHLLKEYPEGSLLSVTMNIPGPIKTSPKLLEVFDIVIKAIQTALADDKICYQLRLLPTTGYEYYLITSLPSRDLKLKMIALETELPIGRLMDLDVLVLQNDLPHSISRTVLGGSPRQCFICSKEAKVCGRLRKHSVEEMQTAISKLLHSFFNKDNQSSSSDKTG</sequence>